<feature type="chain" id="PRO_0000352195" description="NAD(P)H-quinone oxidoreductase subunit M">
    <location>
        <begin position="1"/>
        <end position="115"/>
    </location>
</feature>
<sequence length="115" mass="13421">MSNTILKCTTRHVRIFTAVVENNDLIFDNGHLTLDIDPDNEFSWSDQSIKKVQDYFRELVDFQADNELSDYSLRKIGSLLEDFIRKLLKDGELSYNPNSRVMNYSMGLPRTQELL</sequence>
<keyword id="KW-0472">Membrane</keyword>
<keyword id="KW-0520">NAD</keyword>
<keyword id="KW-0521">NADP</keyword>
<keyword id="KW-0618">Plastoquinone</keyword>
<keyword id="KW-0874">Quinone</keyword>
<keyword id="KW-1185">Reference proteome</keyword>
<keyword id="KW-0793">Thylakoid</keyword>
<keyword id="KW-1278">Translocase</keyword>
<keyword id="KW-0813">Transport</keyword>
<comment type="function">
    <text evidence="1">NDH-1 shuttles electrons from an unknown electron donor, via FMN and iron-sulfur (Fe-S) centers, to quinones in the respiratory and/or the photosynthetic chain. The immediate electron acceptor for the enzyme in this species is believed to be plastoquinone. Couples the redox reaction to proton translocation, and thus conserves the redox energy in a proton gradient. Cyanobacterial NDH-1 also plays a role in inorganic carbon-concentration.</text>
</comment>
<comment type="catalytic activity">
    <reaction evidence="1">
        <text>a plastoquinone + NADH + (n+1) H(+)(in) = a plastoquinol + NAD(+) + n H(+)(out)</text>
        <dbReference type="Rhea" id="RHEA:42608"/>
        <dbReference type="Rhea" id="RHEA-COMP:9561"/>
        <dbReference type="Rhea" id="RHEA-COMP:9562"/>
        <dbReference type="ChEBI" id="CHEBI:15378"/>
        <dbReference type="ChEBI" id="CHEBI:17757"/>
        <dbReference type="ChEBI" id="CHEBI:57540"/>
        <dbReference type="ChEBI" id="CHEBI:57945"/>
        <dbReference type="ChEBI" id="CHEBI:62192"/>
    </reaction>
</comment>
<comment type="catalytic activity">
    <reaction evidence="1">
        <text>a plastoquinone + NADPH + (n+1) H(+)(in) = a plastoquinol + NADP(+) + n H(+)(out)</text>
        <dbReference type="Rhea" id="RHEA:42612"/>
        <dbReference type="Rhea" id="RHEA-COMP:9561"/>
        <dbReference type="Rhea" id="RHEA-COMP:9562"/>
        <dbReference type="ChEBI" id="CHEBI:15378"/>
        <dbReference type="ChEBI" id="CHEBI:17757"/>
        <dbReference type="ChEBI" id="CHEBI:57783"/>
        <dbReference type="ChEBI" id="CHEBI:58349"/>
        <dbReference type="ChEBI" id="CHEBI:62192"/>
    </reaction>
</comment>
<comment type="subunit">
    <text evidence="1">NDH-1 can be composed of about 15 different subunits; different subcomplexes with different compositions have been identified which probably have different functions.</text>
</comment>
<comment type="subcellular location">
    <subcellularLocation>
        <location evidence="1">Cellular thylakoid membrane</location>
        <topology evidence="1">Peripheral membrane protein</topology>
        <orientation evidence="1">Cytoplasmic side</orientation>
    </subcellularLocation>
</comment>
<comment type="similarity">
    <text evidence="1">Belongs to the complex I NdhM subunit family.</text>
</comment>
<proteinExistence type="inferred from homology"/>
<dbReference type="EC" id="7.1.1.-" evidence="1"/>
<dbReference type="EMBL" id="CP000095">
    <property type="protein sequence ID" value="AAZ58999.1"/>
    <property type="molecule type" value="Genomic_DNA"/>
</dbReference>
<dbReference type="RefSeq" id="WP_011294144.1">
    <property type="nucleotide sequence ID" value="NC_007335.2"/>
</dbReference>
<dbReference type="SMR" id="Q46HM9"/>
<dbReference type="STRING" id="59920.PMN2A_1511"/>
<dbReference type="KEGG" id="pmn:PMN2A_1511"/>
<dbReference type="HOGENOM" id="CLU_137431_0_0_3"/>
<dbReference type="OrthoDB" id="461686at2"/>
<dbReference type="PhylomeDB" id="Q46HM9"/>
<dbReference type="Proteomes" id="UP000002535">
    <property type="component" value="Chromosome"/>
</dbReference>
<dbReference type="GO" id="GO:0031676">
    <property type="term" value="C:plasma membrane-derived thylakoid membrane"/>
    <property type="evidence" value="ECO:0007669"/>
    <property type="project" value="UniProtKB-SubCell"/>
</dbReference>
<dbReference type="GO" id="GO:0016655">
    <property type="term" value="F:oxidoreductase activity, acting on NAD(P)H, quinone or similar compound as acceptor"/>
    <property type="evidence" value="ECO:0007669"/>
    <property type="project" value="UniProtKB-UniRule"/>
</dbReference>
<dbReference type="GO" id="GO:0048038">
    <property type="term" value="F:quinone binding"/>
    <property type="evidence" value="ECO:0007669"/>
    <property type="project" value="UniProtKB-KW"/>
</dbReference>
<dbReference type="HAMAP" id="MF_01352">
    <property type="entry name" value="NDH1_NDH1M"/>
    <property type="match status" value="1"/>
</dbReference>
<dbReference type="InterPro" id="IPR018922">
    <property type="entry name" value="NdhM"/>
</dbReference>
<dbReference type="PANTHER" id="PTHR36900">
    <property type="entry name" value="NAD(P)H-QUINONE OXIDOREDUCTASE SUBUNIT M, CHLOROPLASTIC"/>
    <property type="match status" value="1"/>
</dbReference>
<dbReference type="PANTHER" id="PTHR36900:SF1">
    <property type="entry name" value="NAD(P)H-QUINONE OXIDOREDUCTASE SUBUNIT M, CHLOROPLASTIC"/>
    <property type="match status" value="1"/>
</dbReference>
<dbReference type="Pfam" id="PF10664">
    <property type="entry name" value="NdhM"/>
    <property type="match status" value="1"/>
</dbReference>
<gene>
    <name evidence="1" type="primary">ndhM</name>
    <name type="ordered locus">PMN2A_1511</name>
</gene>
<protein>
    <recommendedName>
        <fullName evidence="1">NAD(P)H-quinone oxidoreductase subunit M</fullName>
        <ecNumber evidence="1">7.1.1.-</ecNumber>
    </recommendedName>
    <alternativeName>
        <fullName evidence="1">NAD(P)H dehydrogenase I subunit M</fullName>
        <shortName evidence="1">NDH-1 subunit M</shortName>
        <shortName evidence="1">NDH-M</shortName>
    </alternativeName>
</protein>
<reference key="1">
    <citation type="journal article" date="2007" name="PLoS Genet.">
        <title>Patterns and implications of gene gain and loss in the evolution of Prochlorococcus.</title>
        <authorList>
            <person name="Kettler G.C."/>
            <person name="Martiny A.C."/>
            <person name="Huang K."/>
            <person name="Zucker J."/>
            <person name="Coleman M.L."/>
            <person name="Rodrigue S."/>
            <person name="Chen F."/>
            <person name="Lapidus A."/>
            <person name="Ferriera S."/>
            <person name="Johnson J."/>
            <person name="Steglich C."/>
            <person name="Church G.M."/>
            <person name="Richardson P."/>
            <person name="Chisholm S.W."/>
        </authorList>
    </citation>
    <scope>NUCLEOTIDE SEQUENCE [LARGE SCALE GENOMIC DNA]</scope>
    <source>
        <strain>NATL2A</strain>
    </source>
</reference>
<accession>Q46HM9</accession>
<evidence type="ECO:0000255" key="1">
    <source>
        <dbReference type="HAMAP-Rule" id="MF_01352"/>
    </source>
</evidence>
<organism>
    <name type="scientific">Prochlorococcus marinus (strain NATL2A)</name>
    <dbReference type="NCBI Taxonomy" id="59920"/>
    <lineage>
        <taxon>Bacteria</taxon>
        <taxon>Bacillati</taxon>
        <taxon>Cyanobacteriota</taxon>
        <taxon>Cyanophyceae</taxon>
        <taxon>Synechococcales</taxon>
        <taxon>Prochlorococcaceae</taxon>
        <taxon>Prochlorococcus</taxon>
    </lineage>
</organism>
<name>NDHM_PROMT</name>